<name>DNLJ_PARMW</name>
<protein>
    <recommendedName>
        <fullName evidence="1">DNA ligase</fullName>
        <ecNumber evidence="1">6.5.1.2</ecNumber>
    </recommendedName>
    <alternativeName>
        <fullName evidence="1">Polydeoxyribonucleotide synthase [NAD(+)]</fullName>
    </alternativeName>
</protein>
<comment type="function">
    <text evidence="1">DNA ligase that catalyzes the formation of phosphodiester linkages between 5'-phosphoryl and 3'-hydroxyl groups in double-stranded DNA using NAD as a coenzyme and as the energy source for the reaction. It is essential for DNA replication and repair of damaged DNA.</text>
</comment>
<comment type="catalytic activity">
    <reaction evidence="1">
        <text>NAD(+) + (deoxyribonucleotide)n-3'-hydroxyl + 5'-phospho-(deoxyribonucleotide)m = (deoxyribonucleotide)n+m + AMP + beta-nicotinamide D-nucleotide.</text>
        <dbReference type="EC" id="6.5.1.2"/>
    </reaction>
</comment>
<comment type="cofactor">
    <cofactor evidence="1">
        <name>Mg(2+)</name>
        <dbReference type="ChEBI" id="CHEBI:18420"/>
    </cofactor>
    <cofactor evidence="1">
        <name>Mn(2+)</name>
        <dbReference type="ChEBI" id="CHEBI:29035"/>
    </cofactor>
</comment>
<comment type="similarity">
    <text evidence="1">Belongs to the NAD-dependent DNA ligase family. LigA subfamily.</text>
</comment>
<dbReference type="EC" id="6.5.1.2" evidence="1"/>
<dbReference type="EMBL" id="BX569695">
    <property type="protein sequence ID" value="CAE08904.1"/>
    <property type="molecule type" value="Genomic_DNA"/>
</dbReference>
<dbReference type="RefSeq" id="WP_011129242.1">
    <property type="nucleotide sequence ID" value="NC_005070.1"/>
</dbReference>
<dbReference type="SMR" id="Q7U3P1"/>
<dbReference type="STRING" id="84588.SYNW2389"/>
<dbReference type="KEGG" id="syw:SYNW2389"/>
<dbReference type="eggNOG" id="COG0272">
    <property type="taxonomic scope" value="Bacteria"/>
</dbReference>
<dbReference type="HOGENOM" id="CLU_007764_2_1_3"/>
<dbReference type="Proteomes" id="UP000001422">
    <property type="component" value="Chromosome"/>
</dbReference>
<dbReference type="GO" id="GO:0005829">
    <property type="term" value="C:cytosol"/>
    <property type="evidence" value="ECO:0007669"/>
    <property type="project" value="TreeGrafter"/>
</dbReference>
<dbReference type="GO" id="GO:0003911">
    <property type="term" value="F:DNA ligase (NAD+) activity"/>
    <property type="evidence" value="ECO:0007669"/>
    <property type="project" value="UniProtKB-UniRule"/>
</dbReference>
<dbReference type="GO" id="GO:0046872">
    <property type="term" value="F:metal ion binding"/>
    <property type="evidence" value="ECO:0007669"/>
    <property type="project" value="UniProtKB-KW"/>
</dbReference>
<dbReference type="GO" id="GO:0006281">
    <property type="term" value="P:DNA repair"/>
    <property type="evidence" value="ECO:0007669"/>
    <property type="project" value="UniProtKB-KW"/>
</dbReference>
<dbReference type="GO" id="GO:0006260">
    <property type="term" value="P:DNA replication"/>
    <property type="evidence" value="ECO:0007669"/>
    <property type="project" value="UniProtKB-KW"/>
</dbReference>
<dbReference type="CDD" id="cd17748">
    <property type="entry name" value="BRCT_DNA_ligase_like"/>
    <property type="match status" value="1"/>
</dbReference>
<dbReference type="CDD" id="cd00114">
    <property type="entry name" value="LIGANc"/>
    <property type="match status" value="1"/>
</dbReference>
<dbReference type="FunFam" id="1.10.150.20:FF:000007">
    <property type="entry name" value="DNA ligase"/>
    <property type="match status" value="1"/>
</dbReference>
<dbReference type="FunFam" id="2.40.50.140:FF:000012">
    <property type="entry name" value="DNA ligase"/>
    <property type="match status" value="1"/>
</dbReference>
<dbReference type="FunFam" id="3.30.470.30:FF:000001">
    <property type="entry name" value="DNA ligase"/>
    <property type="match status" value="1"/>
</dbReference>
<dbReference type="Gene3D" id="6.20.10.30">
    <property type="match status" value="1"/>
</dbReference>
<dbReference type="Gene3D" id="1.10.150.20">
    <property type="entry name" value="5' to 3' exonuclease, C-terminal subdomain"/>
    <property type="match status" value="2"/>
</dbReference>
<dbReference type="Gene3D" id="3.40.50.10190">
    <property type="entry name" value="BRCT domain"/>
    <property type="match status" value="1"/>
</dbReference>
<dbReference type="Gene3D" id="3.30.470.30">
    <property type="entry name" value="DNA ligase/mRNA capping enzyme"/>
    <property type="match status" value="1"/>
</dbReference>
<dbReference type="Gene3D" id="1.10.287.610">
    <property type="entry name" value="Helix hairpin bin"/>
    <property type="match status" value="1"/>
</dbReference>
<dbReference type="Gene3D" id="2.40.50.140">
    <property type="entry name" value="Nucleic acid-binding proteins"/>
    <property type="match status" value="1"/>
</dbReference>
<dbReference type="HAMAP" id="MF_01588">
    <property type="entry name" value="DNA_ligase_A"/>
    <property type="match status" value="1"/>
</dbReference>
<dbReference type="InterPro" id="IPR001357">
    <property type="entry name" value="BRCT_dom"/>
</dbReference>
<dbReference type="InterPro" id="IPR036420">
    <property type="entry name" value="BRCT_dom_sf"/>
</dbReference>
<dbReference type="InterPro" id="IPR041663">
    <property type="entry name" value="DisA/LigA_HHH"/>
</dbReference>
<dbReference type="InterPro" id="IPR001679">
    <property type="entry name" value="DNA_ligase"/>
</dbReference>
<dbReference type="InterPro" id="IPR033136">
    <property type="entry name" value="DNA_ligase_CS"/>
</dbReference>
<dbReference type="InterPro" id="IPR013839">
    <property type="entry name" value="DNAligase_adenylation"/>
</dbReference>
<dbReference type="InterPro" id="IPR013840">
    <property type="entry name" value="DNAligase_N"/>
</dbReference>
<dbReference type="InterPro" id="IPR012340">
    <property type="entry name" value="NA-bd_OB-fold"/>
</dbReference>
<dbReference type="InterPro" id="IPR004150">
    <property type="entry name" value="NAD_DNA_ligase_OB"/>
</dbReference>
<dbReference type="InterPro" id="IPR010994">
    <property type="entry name" value="RuvA_2-like"/>
</dbReference>
<dbReference type="InterPro" id="IPR004149">
    <property type="entry name" value="Znf_DNAligase_C4"/>
</dbReference>
<dbReference type="NCBIfam" id="TIGR00575">
    <property type="entry name" value="dnlj"/>
    <property type="match status" value="1"/>
</dbReference>
<dbReference type="NCBIfam" id="NF005932">
    <property type="entry name" value="PRK07956.1"/>
    <property type="match status" value="1"/>
</dbReference>
<dbReference type="PANTHER" id="PTHR23389">
    <property type="entry name" value="CHROMOSOME TRANSMISSION FIDELITY FACTOR 18"/>
    <property type="match status" value="1"/>
</dbReference>
<dbReference type="PANTHER" id="PTHR23389:SF9">
    <property type="entry name" value="DNA LIGASE"/>
    <property type="match status" value="1"/>
</dbReference>
<dbReference type="Pfam" id="PF00533">
    <property type="entry name" value="BRCT"/>
    <property type="match status" value="1"/>
</dbReference>
<dbReference type="Pfam" id="PF01653">
    <property type="entry name" value="DNA_ligase_aden"/>
    <property type="match status" value="1"/>
</dbReference>
<dbReference type="Pfam" id="PF03120">
    <property type="entry name" value="DNA_ligase_OB"/>
    <property type="match status" value="1"/>
</dbReference>
<dbReference type="Pfam" id="PF03119">
    <property type="entry name" value="DNA_ligase_ZBD"/>
    <property type="match status" value="1"/>
</dbReference>
<dbReference type="Pfam" id="PF12826">
    <property type="entry name" value="HHH_2"/>
    <property type="match status" value="1"/>
</dbReference>
<dbReference type="Pfam" id="PF14520">
    <property type="entry name" value="HHH_5"/>
    <property type="match status" value="1"/>
</dbReference>
<dbReference type="Pfam" id="PF22745">
    <property type="entry name" value="Nlig-Ia"/>
    <property type="match status" value="1"/>
</dbReference>
<dbReference type="PIRSF" id="PIRSF001604">
    <property type="entry name" value="LigA"/>
    <property type="match status" value="1"/>
</dbReference>
<dbReference type="SMART" id="SM00292">
    <property type="entry name" value="BRCT"/>
    <property type="match status" value="1"/>
</dbReference>
<dbReference type="SMART" id="SM00532">
    <property type="entry name" value="LIGANc"/>
    <property type="match status" value="1"/>
</dbReference>
<dbReference type="SUPFAM" id="SSF52113">
    <property type="entry name" value="BRCT domain"/>
    <property type="match status" value="1"/>
</dbReference>
<dbReference type="SUPFAM" id="SSF56091">
    <property type="entry name" value="DNA ligase/mRNA capping enzyme, catalytic domain"/>
    <property type="match status" value="1"/>
</dbReference>
<dbReference type="SUPFAM" id="SSF50249">
    <property type="entry name" value="Nucleic acid-binding proteins"/>
    <property type="match status" value="1"/>
</dbReference>
<dbReference type="SUPFAM" id="SSF47781">
    <property type="entry name" value="RuvA domain 2-like"/>
    <property type="match status" value="1"/>
</dbReference>
<dbReference type="PROSITE" id="PS50172">
    <property type="entry name" value="BRCT"/>
    <property type="match status" value="1"/>
</dbReference>
<dbReference type="PROSITE" id="PS01056">
    <property type="entry name" value="DNA_LIGASE_N2"/>
    <property type="match status" value="1"/>
</dbReference>
<organism>
    <name type="scientific">Parasynechococcus marenigrum (strain WH8102)</name>
    <dbReference type="NCBI Taxonomy" id="84588"/>
    <lineage>
        <taxon>Bacteria</taxon>
        <taxon>Bacillati</taxon>
        <taxon>Cyanobacteriota</taxon>
        <taxon>Cyanophyceae</taxon>
        <taxon>Synechococcales</taxon>
        <taxon>Prochlorococcaceae</taxon>
        <taxon>Parasynechococcus</taxon>
        <taxon>Parasynechococcus marenigrum</taxon>
    </lineage>
</organism>
<sequence>MAEQQQRAAELRSLLNRAAHAYYVLDAPVMEDTLYDRLYRELQQLEQADPSLLSADSPTQRVGKAPATGFHSVEHRIPLQSLDNAFDHGELKAWHERLLKVLDRADDSPLPLVGELKIDGNALALSYRHGVLERAATRGDGSSGEEITANVRTISSIPLRLQIDDPPEWVEVRGEAFIPDDTFAAINNERAAHGDALFANPRNACAGTLRQLDPKVVAARRLDFFAYTLHLPSDHSNSPECQWDVLAWLEQAGFRVNPNRELCDGLNGIERFCDRWEQQRHQLTYATDGVVVKLNDLRLQDEAGTTQKAPRWAIALKYPAEEAPSKLLKLAVQVGRTGAVTPVAEFEPVALAGTSVSRATLHNADRIAELDLHLGDTVVVRKAGEIIPEVVRVLPELRPTGAVPLELPDHCPECGSNLVRDDSEAATRCINSSCPAILRGGLRHWVSKGALDVDGLGNKLIQQLVERGLVRSIADLYRLDAALLASLERVGEKSAANLVAALEQSKQQPWHRQLYGLGIRHIGEVNAKALAAAYPNSASLAAAEPESIAALHGIGPEISSSLQQWHANPPNQRLLEDLRAVGLSLEANTSELNANSTGEGNSSGALLGKTLVLTGTLPNLSRSDAKTLIEGAGGKVSGSVSKKTDYLVAGEAAGSKLSKAESLGVEILTEAELQKLLST</sequence>
<accession>Q7U3P1</accession>
<gene>
    <name evidence="1" type="primary">ligA</name>
    <name type="ordered locus">SYNW2389</name>
</gene>
<proteinExistence type="inferred from homology"/>
<keyword id="KW-0227">DNA damage</keyword>
<keyword id="KW-0234">DNA repair</keyword>
<keyword id="KW-0235">DNA replication</keyword>
<keyword id="KW-0436">Ligase</keyword>
<keyword id="KW-0460">Magnesium</keyword>
<keyword id="KW-0464">Manganese</keyword>
<keyword id="KW-0479">Metal-binding</keyword>
<keyword id="KW-0520">NAD</keyword>
<keyword id="KW-0862">Zinc</keyword>
<feature type="chain" id="PRO_0000313487" description="DNA ligase">
    <location>
        <begin position="1"/>
        <end position="679"/>
    </location>
</feature>
<feature type="domain" description="BRCT" evidence="1">
    <location>
        <begin position="601"/>
        <end position="679"/>
    </location>
</feature>
<feature type="active site" description="N6-AMP-lysine intermediate" evidence="1">
    <location>
        <position position="117"/>
    </location>
</feature>
<feature type="binding site" evidence="1">
    <location>
        <begin position="32"/>
        <end position="36"/>
    </location>
    <ligand>
        <name>NAD(+)</name>
        <dbReference type="ChEBI" id="CHEBI:57540"/>
    </ligand>
</feature>
<feature type="binding site" evidence="1">
    <location>
        <begin position="81"/>
        <end position="82"/>
    </location>
    <ligand>
        <name>NAD(+)</name>
        <dbReference type="ChEBI" id="CHEBI:57540"/>
    </ligand>
</feature>
<feature type="binding site" evidence="1">
    <location>
        <position position="115"/>
    </location>
    <ligand>
        <name>NAD(+)</name>
        <dbReference type="ChEBI" id="CHEBI:57540"/>
    </ligand>
</feature>
<feature type="binding site" evidence="1">
    <location>
        <position position="138"/>
    </location>
    <ligand>
        <name>NAD(+)</name>
        <dbReference type="ChEBI" id="CHEBI:57540"/>
    </ligand>
</feature>
<feature type="binding site" evidence="1">
    <location>
        <position position="175"/>
    </location>
    <ligand>
        <name>NAD(+)</name>
        <dbReference type="ChEBI" id="CHEBI:57540"/>
    </ligand>
</feature>
<feature type="binding site" evidence="1">
    <location>
        <position position="293"/>
    </location>
    <ligand>
        <name>NAD(+)</name>
        <dbReference type="ChEBI" id="CHEBI:57540"/>
    </ligand>
</feature>
<feature type="binding site" evidence="1">
    <location>
        <position position="317"/>
    </location>
    <ligand>
        <name>NAD(+)</name>
        <dbReference type="ChEBI" id="CHEBI:57540"/>
    </ligand>
</feature>
<feature type="binding site" evidence="1">
    <location>
        <position position="411"/>
    </location>
    <ligand>
        <name>Zn(2+)</name>
        <dbReference type="ChEBI" id="CHEBI:29105"/>
    </ligand>
</feature>
<feature type="binding site" evidence="1">
    <location>
        <position position="414"/>
    </location>
    <ligand>
        <name>Zn(2+)</name>
        <dbReference type="ChEBI" id="CHEBI:29105"/>
    </ligand>
</feature>
<feature type="binding site" evidence="1">
    <location>
        <position position="429"/>
    </location>
    <ligand>
        <name>Zn(2+)</name>
        <dbReference type="ChEBI" id="CHEBI:29105"/>
    </ligand>
</feature>
<feature type="binding site" evidence="1">
    <location>
        <position position="434"/>
    </location>
    <ligand>
        <name>Zn(2+)</name>
        <dbReference type="ChEBI" id="CHEBI:29105"/>
    </ligand>
</feature>
<reference key="1">
    <citation type="journal article" date="2003" name="Nature">
        <title>The genome of a motile marine Synechococcus.</title>
        <authorList>
            <person name="Palenik B."/>
            <person name="Brahamsha B."/>
            <person name="Larimer F.W."/>
            <person name="Land M.L."/>
            <person name="Hauser L."/>
            <person name="Chain P."/>
            <person name="Lamerdin J.E."/>
            <person name="Regala W."/>
            <person name="Allen E.E."/>
            <person name="McCarren J."/>
            <person name="Paulsen I.T."/>
            <person name="Dufresne A."/>
            <person name="Partensky F."/>
            <person name="Webb E.A."/>
            <person name="Waterbury J."/>
        </authorList>
    </citation>
    <scope>NUCLEOTIDE SEQUENCE [LARGE SCALE GENOMIC DNA]</scope>
    <source>
        <strain>WH8102</strain>
    </source>
</reference>
<evidence type="ECO:0000255" key="1">
    <source>
        <dbReference type="HAMAP-Rule" id="MF_01588"/>
    </source>
</evidence>